<evidence type="ECO:0000250" key="1"/>
<evidence type="ECO:0000255" key="2">
    <source>
        <dbReference type="PROSITE-ProRule" id="PRU10021"/>
    </source>
</evidence>
<evidence type="ECO:0000305" key="3"/>
<comment type="function">
    <text>This enzyme is an effector of chloramphenicol resistance in bacteria.</text>
</comment>
<comment type="catalytic activity">
    <reaction evidence="2">
        <text>chloramphenicol + acetyl-CoA = chloramphenicol 3-acetate + CoA</text>
        <dbReference type="Rhea" id="RHEA:18421"/>
        <dbReference type="ChEBI" id="CHEBI:16730"/>
        <dbReference type="ChEBI" id="CHEBI:17698"/>
        <dbReference type="ChEBI" id="CHEBI:57287"/>
        <dbReference type="ChEBI" id="CHEBI:57288"/>
        <dbReference type="EC" id="2.3.1.28"/>
    </reaction>
</comment>
<comment type="subunit">
    <text evidence="1">Homotrimer.</text>
</comment>
<comment type="similarity">
    <text evidence="3">Belongs to the chloramphenicol acetyltransferase family.</text>
</comment>
<name>CAT_KLESP</name>
<geneLocation type="plasmid">
    <name>R429</name>
</geneLocation>
<reference key="1">
    <citation type="journal article" date="1979" name="Nature">
        <title>Primary structure of a chloramphenicol acetyltransferase specified by R plasmids.</title>
        <authorList>
            <person name="Shaw W.V."/>
            <person name="Packman L.C."/>
            <person name="Burleigh B.D."/>
            <person name="Dell A."/>
            <person name="Morris H.R."/>
            <person name="Hartley B.S."/>
        </authorList>
    </citation>
    <scope>PROTEIN SEQUENCE</scope>
</reference>
<reference key="2">
    <citation type="journal article" date="1972" name="Proc. Natl. Acad. Sci. U.S.A.">
        <title>Hybridization of variants of chloramphenicol acetyltransferase specified by fi + and fi - R factors.</title>
        <authorList>
            <person name="Shaw W.V."/>
            <person name="Sands L.C."/>
            <person name="Datta N."/>
        </authorList>
    </citation>
    <scope>CHARACTERIZATION</scope>
</reference>
<gene>
    <name type="primary">cat</name>
</gene>
<accession>P58777</accession>
<sequence>MEKKITGYTTVDISQWHRKEHFEAFQSVAQCTYNQTVQLDITAFLKTVKKNKHKFYPAFIHILARLMNAHPEFRMAMKDGELVIWDSVHPCYTVFHEQTETFSSLWSEYHDDFRQFLHIYSQDVACYGENLAYFPKGFIENMFFVSANPWVSFTSFDLNVAAMDNFFAPVFTMGKYYTQGDKVLMPLAIQVHHAVCDGFHVGRMLNELQQYCDEWQGGA</sequence>
<protein>
    <recommendedName>
        <fullName>Chloramphenicol acetyltransferase</fullName>
        <shortName>CAT</shortName>
        <ecNumber>2.3.1.28</ecNumber>
    </recommendedName>
</protein>
<keyword id="KW-0012">Acyltransferase</keyword>
<keyword id="KW-0046">Antibiotic resistance</keyword>
<keyword id="KW-0903">Direct protein sequencing</keyword>
<keyword id="KW-0614">Plasmid</keyword>
<keyword id="KW-0808">Transferase</keyword>
<feature type="chain" id="PRO_0000165866" description="Chloramphenicol acetyltransferase">
    <location>
        <begin position="1"/>
        <end position="219"/>
    </location>
</feature>
<feature type="active site" description="Proton acceptor" evidence="2">
    <location>
        <position position="193"/>
    </location>
</feature>
<proteinExistence type="evidence at protein level"/>
<dbReference type="EC" id="2.3.1.28"/>
<dbReference type="SMR" id="P58777"/>
<dbReference type="GO" id="GO:0008811">
    <property type="term" value="F:chloramphenicol O-acetyltransferase activity"/>
    <property type="evidence" value="ECO:0007669"/>
    <property type="project" value="UniProtKB-EC"/>
</dbReference>
<dbReference type="GO" id="GO:0046677">
    <property type="term" value="P:response to antibiotic"/>
    <property type="evidence" value="ECO:0007669"/>
    <property type="project" value="UniProtKB-KW"/>
</dbReference>
<dbReference type="Gene3D" id="3.30.559.10">
    <property type="entry name" value="Chloramphenicol acetyltransferase-like domain"/>
    <property type="match status" value="1"/>
</dbReference>
<dbReference type="InterPro" id="IPR023213">
    <property type="entry name" value="CAT-like_dom_sf"/>
</dbReference>
<dbReference type="InterPro" id="IPR018372">
    <property type="entry name" value="Chloramphenicol_AcTrfase_AS"/>
</dbReference>
<dbReference type="InterPro" id="IPR001707">
    <property type="entry name" value="Cmp_AcTrfase"/>
</dbReference>
<dbReference type="NCBIfam" id="NF000491">
    <property type="entry name" value="chloram_CatA"/>
    <property type="match status" value="1"/>
</dbReference>
<dbReference type="PANTHER" id="PTHR38474:SF2">
    <property type="entry name" value="CHLORAMPHENICOL ACETYLTRANSFERASE"/>
    <property type="match status" value="1"/>
</dbReference>
<dbReference type="PANTHER" id="PTHR38474">
    <property type="entry name" value="SLR0299 PROTEIN"/>
    <property type="match status" value="1"/>
</dbReference>
<dbReference type="Pfam" id="PF00302">
    <property type="entry name" value="CAT"/>
    <property type="match status" value="1"/>
</dbReference>
<dbReference type="PIRSF" id="PIRSF000440">
    <property type="entry name" value="CAT"/>
    <property type="match status" value="1"/>
</dbReference>
<dbReference type="SMART" id="SM01059">
    <property type="entry name" value="CAT"/>
    <property type="match status" value="1"/>
</dbReference>
<dbReference type="SUPFAM" id="SSF52777">
    <property type="entry name" value="CoA-dependent acyltransferases"/>
    <property type="match status" value="1"/>
</dbReference>
<dbReference type="PROSITE" id="PS00100">
    <property type="entry name" value="CAT"/>
    <property type="match status" value="1"/>
</dbReference>
<organism>
    <name type="scientific">Klebsiella sp</name>
    <dbReference type="NCBI Taxonomy" id="576"/>
    <lineage>
        <taxon>Bacteria</taxon>
        <taxon>Pseudomonadati</taxon>
        <taxon>Pseudomonadota</taxon>
        <taxon>Gammaproteobacteria</taxon>
        <taxon>Enterobacterales</taxon>
        <taxon>Enterobacteriaceae</taxon>
        <taxon>Klebsiella/Raoultella group</taxon>
        <taxon>Klebsiella</taxon>
    </lineage>
</organism>